<reference key="1">
    <citation type="journal article" date="2013" name="Nature">
        <title>The zebrafish reference genome sequence and its relationship to the human genome.</title>
        <authorList>
            <person name="Howe K."/>
            <person name="Clark M.D."/>
            <person name="Torroja C.F."/>
            <person name="Torrance J."/>
            <person name="Berthelot C."/>
            <person name="Muffato M."/>
            <person name="Collins J.E."/>
            <person name="Humphray S."/>
            <person name="McLaren K."/>
            <person name="Matthews L."/>
            <person name="McLaren S."/>
            <person name="Sealy I."/>
            <person name="Caccamo M."/>
            <person name="Churcher C."/>
            <person name="Scott C."/>
            <person name="Barrett J.C."/>
            <person name="Koch R."/>
            <person name="Rauch G.J."/>
            <person name="White S."/>
            <person name="Chow W."/>
            <person name="Kilian B."/>
            <person name="Quintais L.T."/>
            <person name="Guerra-Assuncao J.A."/>
            <person name="Zhou Y."/>
            <person name="Gu Y."/>
            <person name="Yen J."/>
            <person name="Vogel J.H."/>
            <person name="Eyre T."/>
            <person name="Redmond S."/>
            <person name="Banerjee R."/>
            <person name="Chi J."/>
            <person name="Fu B."/>
            <person name="Langley E."/>
            <person name="Maguire S.F."/>
            <person name="Laird G.K."/>
            <person name="Lloyd D."/>
            <person name="Kenyon E."/>
            <person name="Donaldson S."/>
            <person name="Sehra H."/>
            <person name="Almeida-King J."/>
            <person name="Loveland J."/>
            <person name="Trevanion S."/>
            <person name="Jones M."/>
            <person name="Quail M."/>
            <person name="Willey D."/>
            <person name="Hunt A."/>
            <person name="Burton J."/>
            <person name="Sims S."/>
            <person name="McLay K."/>
            <person name="Plumb B."/>
            <person name="Davis J."/>
            <person name="Clee C."/>
            <person name="Oliver K."/>
            <person name="Clark R."/>
            <person name="Riddle C."/>
            <person name="Elliot D."/>
            <person name="Threadgold G."/>
            <person name="Harden G."/>
            <person name="Ware D."/>
            <person name="Begum S."/>
            <person name="Mortimore B."/>
            <person name="Kerry G."/>
            <person name="Heath P."/>
            <person name="Phillimore B."/>
            <person name="Tracey A."/>
            <person name="Corby N."/>
            <person name="Dunn M."/>
            <person name="Johnson C."/>
            <person name="Wood J."/>
            <person name="Clark S."/>
            <person name="Pelan S."/>
            <person name="Griffiths G."/>
            <person name="Smith M."/>
            <person name="Glithero R."/>
            <person name="Howden P."/>
            <person name="Barker N."/>
            <person name="Lloyd C."/>
            <person name="Stevens C."/>
            <person name="Harley J."/>
            <person name="Holt K."/>
            <person name="Panagiotidis G."/>
            <person name="Lovell J."/>
            <person name="Beasley H."/>
            <person name="Henderson C."/>
            <person name="Gordon D."/>
            <person name="Auger K."/>
            <person name="Wright D."/>
            <person name="Collins J."/>
            <person name="Raisen C."/>
            <person name="Dyer L."/>
            <person name="Leung K."/>
            <person name="Robertson L."/>
            <person name="Ambridge K."/>
            <person name="Leongamornlert D."/>
            <person name="McGuire S."/>
            <person name="Gilderthorp R."/>
            <person name="Griffiths C."/>
            <person name="Manthravadi D."/>
            <person name="Nichol S."/>
            <person name="Barker G."/>
            <person name="Whitehead S."/>
            <person name="Kay M."/>
            <person name="Brown J."/>
            <person name="Murnane C."/>
            <person name="Gray E."/>
            <person name="Humphries M."/>
            <person name="Sycamore N."/>
            <person name="Barker D."/>
            <person name="Saunders D."/>
            <person name="Wallis J."/>
            <person name="Babbage A."/>
            <person name="Hammond S."/>
            <person name="Mashreghi-Mohammadi M."/>
            <person name="Barr L."/>
            <person name="Martin S."/>
            <person name="Wray P."/>
            <person name="Ellington A."/>
            <person name="Matthews N."/>
            <person name="Ellwood M."/>
            <person name="Woodmansey R."/>
            <person name="Clark G."/>
            <person name="Cooper J."/>
            <person name="Tromans A."/>
            <person name="Grafham D."/>
            <person name="Skuce C."/>
            <person name="Pandian R."/>
            <person name="Andrews R."/>
            <person name="Harrison E."/>
            <person name="Kimberley A."/>
            <person name="Garnett J."/>
            <person name="Fosker N."/>
            <person name="Hall R."/>
            <person name="Garner P."/>
            <person name="Kelly D."/>
            <person name="Bird C."/>
            <person name="Palmer S."/>
            <person name="Gehring I."/>
            <person name="Berger A."/>
            <person name="Dooley C.M."/>
            <person name="Ersan-Urun Z."/>
            <person name="Eser C."/>
            <person name="Geiger H."/>
            <person name="Geisler M."/>
            <person name="Karotki L."/>
            <person name="Kirn A."/>
            <person name="Konantz J."/>
            <person name="Konantz M."/>
            <person name="Oberlander M."/>
            <person name="Rudolph-Geiger S."/>
            <person name="Teucke M."/>
            <person name="Lanz C."/>
            <person name="Raddatz G."/>
            <person name="Osoegawa K."/>
            <person name="Zhu B."/>
            <person name="Rapp A."/>
            <person name="Widaa S."/>
            <person name="Langford C."/>
            <person name="Yang F."/>
            <person name="Schuster S.C."/>
            <person name="Carter N.P."/>
            <person name="Harrow J."/>
            <person name="Ning Z."/>
            <person name="Herrero J."/>
            <person name="Searle S.M."/>
            <person name="Enright A."/>
            <person name="Geisler R."/>
            <person name="Plasterk R.H."/>
            <person name="Lee C."/>
            <person name="Westerfield M."/>
            <person name="de Jong P.J."/>
            <person name="Zon L.I."/>
            <person name="Postlethwait J.H."/>
            <person name="Nusslein-Volhard C."/>
            <person name="Hubbard T.J."/>
            <person name="Roest Crollius H."/>
            <person name="Rogers J."/>
            <person name="Stemple D.L."/>
        </authorList>
    </citation>
    <scope>NUCLEOTIDE SEQUENCE [LARGE SCALE GENOMIC DNA]</scope>
    <source>
        <strain>Tuebingen</strain>
    </source>
</reference>
<reference key="2">
    <citation type="submission" date="2003-08" db="EMBL/GenBank/DDBJ databases">
        <authorList>
            <consortium name="NIH - Zebrafish Gene Collection (ZGC) project"/>
        </authorList>
    </citation>
    <scope>NUCLEOTIDE SEQUENCE [LARGE SCALE MRNA] OF 1-666</scope>
    <source>
        <strain>AB</strain>
    </source>
</reference>
<organism>
    <name type="scientific">Danio rerio</name>
    <name type="common">Zebrafish</name>
    <name type="synonym">Brachydanio rerio</name>
    <dbReference type="NCBI Taxonomy" id="7955"/>
    <lineage>
        <taxon>Eukaryota</taxon>
        <taxon>Metazoa</taxon>
        <taxon>Chordata</taxon>
        <taxon>Craniata</taxon>
        <taxon>Vertebrata</taxon>
        <taxon>Euteleostomi</taxon>
        <taxon>Actinopterygii</taxon>
        <taxon>Neopterygii</taxon>
        <taxon>Teleostei</taxon>
        <taxon>Ostariophysi</taxon>
        <taxon>Cypriniformes</taxon>
        <taxon>Danionidae</taxon>
        <taxon>Danioninae</taxon>
        <taxon>Danio</taxon>
    </lineage>
</organism>
<name>UVSSA_DANRE</name>
<evidence type="ECO:0000250" key="1">
    <source>
        <dbReference type="UniProtKB" id="Q2YD98"/>
    </source>
</evidence>
<evidence type="ECO:0000255" key="2"/>
<evidence type="ECO:0000255" key="3">
    <source>
        <dbReference type="PROSITE-ProRule" id="PRU01403"/>
    </source>
</evidence>
<evidence type="ECO:0000256" key="4">
    <source>
        <dbReference type="SAM" id="MobiDB-lite"/>
    </source>
</evidence>
<evidence type="ECO:0000305" key="5"/>
<comment type="function">
    <text evidence="1">Factor involved in transcription-coupled nucleotide excision repair (TC-NER), a mechanism that rapidly removes RNA polymerase II-blocking lesions from the transcribed strand of active genes. Acts as a key adapter that promotes recruitment of factors involved in TC-NER. Facilitates the ubiquitination of the elongating form of RNA polymerase II (RNA pol IIo) at DNA damage sites, thereby promoting RNA pol IIo backtracking and access by the TC-NER machinery to lesion sites. Also promotes stabilization of ERCC6/CSB by recruiting deubiquitinating enzyme USP7 to TC-NER complexes, preventing UV-induced degradation of ERCC6 by the proteasome. Mediates the recruitment of the TFIIH complex and other factors that are required for nucleotide excision repair to RNA polymerase II. Also required to inactivate stalled RNA polymerase II by blocking the access of TCEA1/TFIIS, thereby preventing reactivation of RNA polymerase II.</text>
</comment>
<comment type="subcellular location">
    <subcellularLocation>
        <location evidence="1">Chromosome</location>
    </subcellularLocation>
    <text evidence="1">Accumulates at UV DNA damage sites.</text>
</comment>
<comment type="PTM">
    <text evidence="1">Monoubiquitinated at Lys-395 in response to transcription stress; this promotes efficient transfer of TFIIH to stalled RNA polymerase II.</text>
</comment>
<comment type="similarity">
    <text evidence="5">Belongs to the UVSSA family.</text>
</comment>
<comment type="sequence caution" evidence="5">
    <conflict type="miscellaneous discrepancy">
        <sequence resource="EMBL-CDS" id="AAH56778"/>
    </conflict>
    <text>Contaminating sequence. Potential poly-A sequence.</text>
</comment>
<feature type="chain" id="PRO_0000417996" description="UV-stimulated scaffold protein A">
    <location>
        <begin position="1"/>
        <end position="721"/>
    </location>
</feature>
<feature type="zinc finger region" description="UVSSA-type" evidence="3">
    <location>
        <begin position="570"/>
        <end position="597"/>
    </location>
</feature>
<feature type="region of interest" description="VHS-like">
    <location>
        <begin position="6"/>
        <end position="149"/>
    </location>
</feature>
<feature type="region of interest" description="Disordered" evidence="4">
    <location>
        <begin position="223"/>
        <end position="272"/>
    </location>
</feature>
<feature type="region of interest" description="Disordered" evidence="4">
    <location>
        <begin position="409"/>
        <end position="433"/>
    </location>
</feature>
<feature type="region of interest" description="Disordered" evidence="4">
    <location>
        <begin position="472"/>
        <end position="498"/>
    </location>
</feature>
<feature type="region of interest" description="Disordered" evidence="4">
    <location>
        <begin position="616"/>
        <end position="635"/>
    </location>
</feature>
<feature type="region of interest" description="Disordered" evidence="4">
    <location>
        <begin position="641"/>
        <end position="721"/>
    </location>
</feature>
<feature type="coiled-coil region" evidence="2">
    <location>
        <begin position="155"/>
        <end position="203"/>
    </location>
</feature>
<feature type="compositionally biased region" description="Polar residues" evidence="4">
    <location>
        <begin position="223"/>
        <end position="234"/>
    </location>
</feature>
<feature type="compositionally biased region" description="Basic and acidic residues" evidence="4">
    <location>
        <begin position="240"/>
        <end position="258"/>
    </location>
</feature>
<feature type="compositionally biased region" description="Acidic residues" evidence="4">
    <location>
        <begin position="259"/>
        <end position="272"/>
    </location>
</feature>
<feature type="compositionally biased region" description="Low complexity" evidence="4">
    <location>
        <begin position="478"/>
        <end position="494"/>
    </location>
</feature>
<feature type="compositionally biased region" description="Basic residues" evidence="4">
    <location>
        <begin position="653"/>
        <end position="667"/>
    </location>
</feature>
<feature type="binding site" evidence="3">
    <location>
        <position position="573"/>
    </location>
    <ligand>
        <name>Zn(2+)</name>
        <dbReference type="ChEBI" id="CHEBI:29105"/>
    </ligand>
</feature>
<feature type="binding site" evidence="3">
    <location>
        <position position="583"/>
    </location>
    <ligand>
        <name>Zn(2+)</name>
        <dbReference type="ChEBI" id="CHEBI:29105"/>
    </ligand>
</feature>
<feature type="binding site" evidence="3">
    <location>
        <position position="591"/>
    </location>
    <ligand>
        <name>Zn(2+)</name>
        <dbReference type="ChEBI" id="CHEBI:29105"/>
    </ligand>
</feature>
<feature type="binding site" evidence="3">
    <location>
        <position position="594"/>
    </location>
    <ligand>
        <name>Zn(2+)</name>
        <dbReference type="ChEBI" id="CHEBI:29105"/>
    </ligand>
</feature>
<feature type="cross-link" description="Glycyl lysine isopeptide (Lys-Gly) (interchain with G-Cter in ubiquitin)" evidence="1">
    <location>
        <position position="395"/>
    </location>
</feature>
<feature type="sequence conflict" description="In Ref. 2; AAH56778." evidence="5" ref="2">
    <original>A</original>
    <variation>AV</variation>
    <location>
        <position position="220"/>
    </location>
</feature>
<feature type="sequence conflict" description="In Ref. 2; AAH56778." evidence="5" ref="2">
    <original>T</original>
    <variation>G</variation>
    <location>
        <position position="408"/>
    </location>
</feature>
<feature type="sequence conflict" description="In Ref. 2; AAH56778." evidence="5" ref="2">
    <original>V</original>
    <variation>A</variation>
    <location>
        <position position="431"/>
    </location>
</feature>
<feature type="sequence conflict" description="In Ref. 2; AAH56778." evidence="5" ref="2">
    <original>R</original>
    <variation>L</variation>
    <location>
        <position position="465"/>
    </location>
</feature>
<feature type="sequence conflict" description="In Ref. 2; AAH56778." evidence="5" ref="2">
    <original>P</original>
    <variation>L</variation>
    <location>
        <position position="480"/>
    </location>
</feature>
<feature type="sequence conflict" description="In Ref. 2; AAH56778." evidence="5" ref="2">
    <original>S</original>
    <variation>F</variation>
    <location>
        <position position="483"/>
    </location>
</feature>
<feature type="sequence conflict" description="In Ref. 2; AAH56778." evidence="5" ref="2">
    <original>N</original>
    <variation>K</variation>
    <location>
        <position position="499"/>
    </location>
</feature>
<feature type="sequence conflict" description="In Ref. 2; AAH56778." evidence="5" ref="2">
    <original>I</original>
    <variation>V</variation>
    <location>
        <position position="508"/>
    </location>
</feature>
<gene>
    <name type="primary">uvssa</name>
    <name type="ORF">si:dkey-18h19.2</name>
</gene>
<proteinExistence type="evidence at transcript level"/>
<keyword id="KW-0158">Chromosome</keyword>
<keyword id="KW-0175">Coiled coil</keyword>
<keyword id="KW-0227">DNA damage</keyword>
<keyword id="KW-0234">DNA repair</keyword>
<keyword id="KW-1017">Isopeptide bond</keyword>
<keyword id="KW-0479">Metal-binding</keyword>
<keyword id="KW-1185">Reference proteome</keyword>
<keyword id="KW-0832">Ubl conjugation</keyword>
<keyword id="KW-0862">Zinc</keyword>
<keyword id="KW-0863">Zinc-finger</keyword>
<sequence>MDQTMRDKLSQLVEELTTSGEPQLNQDKMKEVKKICRVSDSYIDHFYHLIMTQLNQEHAEIRLSAFQMVNEVFSRSHHFRVLLITNFQEFLELTVETDAEQPLPPPKEVARKLRTLAIQTVQSWHATYGEAYKKLSLGYHFLKQIKKVDFQDVEARTLAERKRQEEKQKRLERIYKEKLDKAKQEMEEMTSGIEETLTEMNNCIRLLATDDFNLFDEDSAASISTTAEDQSDQPCCSKDLSNEHNGKMMEKKTDKEQTDESSDESDMEEVPDEDAFLRSTGLMSYRYQLELDVSADLKVRETEENEALVNTVRDLHRLVTTRHLPLVQSWVQVFTKVGVEEELMRRATELKKSLEHVLRKHEYLHIDYKDRERLVMRAPEDGEDDDDDFVDVPEKEGYEPHIPEHLRTEYGLDETPSTSTSGTKAKPSRPVVKCAVPPVSSSLSRLKRRMCDEEQDPTCAAATLRVLKQKLHPAPSTSVPDGSSESAVSSSDQSNMTKNKASFKAPVIPFGMDLYYWGEEQPTAGKIIKQTSQHQFWVPHEVEEEVENKELSAQMKSRCITYAGKFKPVEHKCKAPMPNGSLCERQDRVKCPFHGHIIPRDELGRPVNPEDALRLEREKRKREEEQPDWRDPELMREIEAATGEDLGSSKTYGKGKKGNKGKSKKKYPNLTDLKQKANTSRSRLEKKVFNKSSMRRVTEVMNKMDKRKHEKFANQFNYALN</sequence>
<dbReference type="EMBL" id="BX119314">
    <property type="status" value="NOT_ANNOTATED_CDS"/>
    <property type="molecule type" value="Genomic_DNA"/>
</dbReference>
<dbReference type="EMBL" id="CR382342">
    <property type="status" value="NOT_ANNOTATED_CDS"/>
    <property type="molecule type" value="Genomic_DNA"/>
</dbReference>
<dbReference type="EMBL" id="BC056778">
    <property type="protein sequence ID" value="AAH56778.1"/>
    <property type="status" value="ALT_SEQ"/>
    <property type="molecule type" value="mRNA"/>
</dbReference>
<dbReference type="RefSeq" id="NP_001333081.1">
    <property type="nucleotide sequence ID" value="NM_001346152.1"/>
</dbReference>
<dbReference type="RefSeq" id="XP_017214592.1">
    <property type="nucleotide sequence ID" value="XM_017359103.1"/>
</dbReference>
<dbReference type="SMR" id="E7EXT2"/>
<dbReference type="FunCoup" id="E7EXT2">
    <property type="interactions" value="701"/>
</dbReference>
<dbReference type="STRING" id="7955.ENSDARP00000133113"/>
<dbReference type="PaxDb" id="7955-ENSDARP00000109630"/>
<dbReference type="PeptideAtlas" id="E7EXT2"/>
<dbReference type="Ensembl" id="ENSDART00000160677">
    <property type="protein sequence ID" value="ENSDARP00000133113"/>
    <property type="gene ID" value="ENSDARG00000100916"/>
</dbReference>
<dbReference type="Ensembl" id="ENSDART00000172666">
    <property type="protein sequence ID" value="ENSDARP00000132945"/>
    <property type="gene ID" value="ENSDARG00000100916"/>
</dbReference>
<dbReference type="GeneID" id="402864"/>
<dbReference type="KEGG" id="dre:402864"/>
<dbReference type="AGR" id="ZFIN:ZDB-GENE-091204-111"/>
<dbReference type="CTD" id="57654"/>
<dbReference type="ZFIN" id="ZDB-GENE-091204-111">
    <property type="gene designation" value="uvssa"/>
</dbReference>
<dbReference type="eggNOG" id="KOG2374">
    <property type="taxonomic scope" value="Eukaryota"/>
</dbReference>
<dbReference type="HOGENOM" id="CLU_023577_0_0_1"/>
<dbReference type="InParanoid" id="E7EXT2"/>
<dbReference type="OMA" id="EEHAEMR"/>
<dbReference type="OrthoDB" id="5594015at2759"/>
<dbReference type="PhylomeDB" id="E7EXT2"/>
<dbReference type="TreeFam" id="TF321660"/>
<dbReference type="Reactome" id="R-DRE-6781823">
    <property type="pathway name" value="Formation of TC-NER Pre-Incision Complex"/>
</dbReference>
<dbReference type="Reactome" id="R-DRE-6782135">
    <property type="pathway name" value="Dual incision in TC-NER"/>
</dbReference>
<dbReference type="PRO" id="PR:E7EXT2"/>
<dbReference type="Proteomes" id="UP000000437">
    <property type="component" value="Chromosome 14"/>
</dbReference>
<dbReference type="Bgee" id="ENSDARG00000100916">
    <property type="expression patterns" value="Expressed in mature ovarian follicle and 19 other cell types or tissues"/>
</dbReference>
<dbReference type="ExpressionAtlas" id="E7EXT2">
    <property type="expression patterns" value="baseline and differential"/>
</dbReference>
<dbReference type="GO" id="GO:0005694">
    <property type="term" value="C:chromosome"/>
    <property type="evidence" value="ECO:0000250"/>
    <property type="project" value="UniProtKB"/>
</dbReference>
<dbReference type="GO" id="GO:0005634">
    <property type="term" value="C:nucleus"/>
    <property type="evidence" value="ECO:0000250"/>
    <property type="project" value="UniProtKB"/>
</dbReference>
<dbReference type="GO" id="GO:0090734">
    <property type="term" value="C:site of DNA damage"/>
    <property type="evidence" value="ECO:0000250"/>
    <property type="project" value="UniProtKB"/>
</dbReference>
<dbReference type="GO" id="GO:0140463">
    <property type="term" value="F:chromatin-protein adaptor activity"/>
    <property type="evidence" value="ECO:0000250"/>
    <property type="project" value="UniProtKB"/>
</dbReference>
<dbReference type="GO" id="GO:0000993">
    <property type="term" value="F:RNA polymerase II complex binding"/>
    <property type="evidence" value="ECO:0000250"/>
    <property type="project" value="UniProtKB"/>
</dbReference>
<dbReference type="GO" id="GO:0140870">
    <property type="term" value="F:RNA polymerase inhibitor activity"/>
    <property type="evidence" value="ECO:0000250"/>
    <property type="project" value="UniProtKB"/>
</dbReference>
<dbReference type="GO" id="GO:0016567">
    <property type="term" value="P:protein ubiquitination"/>
    <property type="evidence" value="ECO:0000250"/>
    <property type="project" value="UniProtKB"/>
</dbReference>
<dbReference type="GO" id="GO:0009411">
    <property type="term" value="P:response to UV"/>
    <property type="evidence" value="ECO:0000250"/>
    <property type="project" value="UniProtKB"/>
</dbReference>
<dbReference type="GO" id="GO:0006283">
    <property type="term" value="P:transcription-coupled nucleotide-excision repair"/>
    <property type="evidence" value="ECO:0000250"/>
    <property type="project" value="UniProtKB"/>
</dbReference>
<dbReference type="InterPro" id="IPR018610">
    <property type="entry name" value="UVSSA"/>
</dbReference>
<dbReference type="InterPro" id="IPR049431">
    <property type="entry name" value="UVSSA_C"/>
</dbReference>
<dbReference type="InterPro" id="IPR049408">
    <property type="entry name" value="UVSSA_N_a-solenoid_rpt"/>
</dbReference>
<dbReference type="PANTHER" id="PTHR28670">
    <property type="entry name" value="UV-STIMULATED SCAFFOLD PROTEIN A"/>
    <property type="match status" value="1"/>
</dbReference>
<dbReference type="PANTHER" id="PTHR28670:SF1">
    <property type="entry name" value="UV-STIMULATED SCAFFOLD PROTEIN A"/>
    <property type="match status" value="1"/>
</dbReference>
<dbReference type="Pfam" id="PF09740">
    <property type="entry name" value="DUF2043"/>
    <property type="match status" value="1"/>
</dbReference>
<dbReference type="Pfam" id="PF20867">
    <property type="entry name" value="UVSSA_N"/>
    <property type="match status" value="1"/>
</dbReference>
<dbReference type="PROSITE" id="PS52058">
    <property type="entry name" value="ZF_UVSSA"/>
    <property type="match status" value="1"/>
</dbReference>
<accession>E7EXT2</accession>
<accession>F1QTE8</accession>
<accession>Q6PGZ1</accession>
<protein>
    <recommendedName>
        <fullName>UV-stimulated scaffold protein A</fullName>
    </recommendedName>
</protein>